<gene>
    <name evidence="1" type="primary">obg</name>
    <name type="ordered locus">BCAH820_4520</name>
</gene>
<accession>B7JQ26</accession>
<comment type="function">
    <text evidence="1">An essential GTPase which binds GTP, GDP and possibly (p)ppGpp with moderate affinity, with high nucleotide exchange rates and a fairly low GTP hydrolysis rate. Plays a role in control of the cell cycle, stress response, ribosome biogenesis and in those bacteria that undergo differentiation, in morphogenesis control.</text>
</comment>
<comment type="cofactor">
    <cofactor evidence="1">
        <name>Mg(2+)</name>
        <dbReference type="ChEBI" id="CHEBI:18420"/>
    </cofactor>
</comment>
<comment type="subunit">
    <text evidence="1">Monomer.</text>
</comment>
<comment type="subcellular location">
    <subcellularLocation>
        <location evidence="1">Cytoplasm</location>
    </subcellularLocation>
</comment>
<comment type="similarity">
    <text evidence="1">Belongs to the TRAFAC class OBG-HflX-like GTPase superfamily. OBG GTPase family.</text>
</comment>
<protein>
    <recommendedName>
        <fullName evidence="1">GTPase Obg</fullName>
        <ecNumber evidence="1">3.6.5.-</ecNumber>
    </recommendedName>
    <alternativeName>
        <fullName evidence="1">GTP-binding protein Obg</fullName>
    </alternativeName>
</protein>
<name>OBG_BACC0</name>
<reference key="1">
    <citation type="submission" date="2008-10" db="EMBL/GenBank/DDBJ databases">
        <title>Genome sequence of Bacillus cereus AH820.</title>
        <authorList>
            <person name="Dodson R.J."/>
            <person name="Durkin A.S."/>
            <person name="Rosovitz M.J."/>
            <person name="Rasko D.A."/>
            <person name="Hoffmaster A."/>
            <person name="Ravel J."/>
            <person name="Sutton G."/>
        </authorList>
    </citation>
    <scope>NUCLEOTIDE SEQUENCE [LARGE SCALE GENOMIC DNA]</scope>
    <source>
        <strain>AH820</strain>
    </source>
</reference>
<proteinExistence type="inferred from homology"/>
<sequence>MFVDQVKIYVKGGDGGNGMVAYRREKYVPKGGPAGGDGGKGADVVFIVEEGLRTLMDFRYQRHFKADRGQHGMSKGQHGRKSEDLLVKVPPGTVVKDEKTGQILADLVTHGQTAVIAKGGRGGRGNSRFATATNPAPEIAENGEPGQERDVILELKVLADVGLVGFPSVGKSTLLSVVSSARPKIAEYHFTTIVPNLGVVETGDNRSFVMADLPGLIEGAHAGVGLGHQFLRHIERTRVIVHVIDMSGLEGRDPYEDYVTINNELKEYNLRLTERPQVVVANKMDMPDAEENLQAFKEKVGDEVKIFPISAVTKQGVRDLLFEVANLIETTPEFPIHEVIDESDTSVMYKFETEGVKFDITRESDGTFVISGYDIEKTFKMTDFSRDESVRRFARQMRGMGIDEALRARGAKDGDIVKILEYEFEFID</sequence>
<feature type="chain" id="PRO_0000385717" description="GTPase Obg">
    <location>
        <begin position="1"/>
        <end position="428"/>
    </location>
</feature>
<feature type="domain" description="Obg" evidence="3">
    <location>
        <begin position="1"/>
        <end position="158"/>
    </location>
</feature>
<feature type="domain" description="OBG-type G" evidence="1">
    <location>
        <begin position="159"/>
        <end position="329"/>
    </location>
</feature>
<feature type="domain" description="OCT" evidence="2">
    <location>
        <begin position="350"/>
        <end position="428"/>
    </location>
</feature>
<feature type="binding site" evidence="1">
    <location>
        <begin position="165"/>
        <end position="172"/>
    </location>
    <ligand>
        <name>GTP</name>
        <dbReference type="ChEBI" id="CHEBI:37565"/>
    </ligand>
</feature>
<feature type="binding site" evidence="1">
    <location>
        <position position="172"/>
    </location>
    <ligand>
        <name>Mg(2+)</name>
        <dbReference type="ChEBI" id="CHEBI:18420"/>
    </ligand>
</feature>
<feature type="binding site" evidence="1">
    <location>
        <begin position="190"/>
        <end position="194"/>
    </location>
    <ligand>
        <name>GTP</name>
        <dbReference type="ChEBI" id="CHEBI:37565"/>
    </ligand>
</feature>
<feature type="binding site" evidence="1">
    <location>
        <position position="192"/>
    </location>
    <ligand>
        <name>Mg(2+)</name>
        <dbReference type="ChEBI" id="CHEBI:18420"/>
    </ligand>
</feature>
<feature type="binding site" evidence="1">
    <location>
        <begin position="212"/>
        <end position="215"/>
    </location>
    <ligand>
        <name>GTP</name>
        <dbReference type="ChEBI" id="CHEBI:37565"/>
    </ligand>
</feature>
<feature type="binding site" evidence="1">
    <location>
        <begin position="282"/>
        <end position="285"/>
    </location>
    <ligand>
        <name>GTP</name>
        <dbReference type="ChEBI" id="CHEBI:37565"/>
    </ligand>
</feature>
<feature type="binding site" evidence="1">
    <location>
        <begin position="310"/>
        <end position="312"/>
    </location>
    <ligand>
        <name>GTP</name>
        <dbReference type="ChEBI" id="CHEBI:37565"/>
    </ligand>
</feature>
<keyword id="KW-0963">Cytoplasm</keyword>
<keyword id="KW-0342">GTP-binding</keyword>
<keyword id="KW-0378">Hydrolase</keyword>
<keyword id="KW-0460">Magnesium</keyword>
<keyword id="KW-0479">Metal-binding</keyword>
<keyword id="KW-0547">Nucleotide-binding</keyword>
<organism>
    <name type="scientific">Bacillus cereus (strain AH820)</name>
    <dbReference type="NCBI Taxonomy" id="405535"/>
    <lineage>
        <taxon>Bacteria</taxon>
        <taxon>Bacillati</taxon>
        <taxon>Bacillota</taxon>
        <taxon>Bacilli</taxon>
        <taxon>Bacillales</taxon>
        <taxon>Bacillaceae</taxon>
        <taxon>Bacillus</taxon>
        <taxon>Bacillus cereus group</taxon>
    </lineage>
</organism>
<evidence type="ECO:0000255" key="1">
    <source>
        <dbReference type="HAMAP-Rule" id="MF_01454"/>
    </source>
</evidence>
<evidence type="ECO:0000255" key="2">
    <source>
        <dbReference type="PROSITE-ProRule" id="PRU01229"/>
    </source>
</evidence>
<evidence type="ECO:0000255" key="3">
    <source>
        <dbReference type="PROSITE-ProRule" id="PRU01231"/>
    </source>
</evidence>
<dbReference type="EC" id="3.6.5.-" evidence="1"/>
<dbReference type="EMBL" id="CP001283">
    <property type="protein sequence ID" value="ACK89668.1"/>
    <property type="molecule type" value="Genomic_DNA"/>
</dbReference>
<dbReference type="RefSeq" id="WP_000496110.1">
    <property type="nucleotide sequence ID" value="NC_011773.1"/>
</dbReference>
<dbReference type="SMR" id="B7JQ26"/>
<dbReference type="KEGG" id="bcu:BCAH820_4520"/>
<dbReference type="HOGENOM" id="CLU_011747_2_1_9"/>
<dbReference type="Proteomes" id="UP000001363">
    <property type="component" value="Chromosome"/>
</dbReference>
<dbReference type="GO" id="GO:0005737">
    <property type="term" value="C:cytoplasm"/>
    <property type="evidence" value="ECO:0007669"/>
    <property type="project" value="UniProtKB-SubCell"/>
</dbReference>
<dbReference type="GO" id="GO:0005525">
    <property type="term" value="F:GTP binding"/>
    <property type="evidence" value="ECO:0007669"/>
    <property type="project" value="UniProtKB-UniRule"/>
</dbReference>
<dbReference type="GO" id="GO:0003924">
    <property type="term" value="F:GTPase activity"/>
    <property type="evidence" value="ECO:0007669"/>
    <property type="project" value="UniProtKB-UniRule"/>
</dbReference>
<dbReference type="GO" id="GO:0000287">
    <property type="term" value="F:magnesium ion binding"/>
    <property type="evidence" value="ECO:0007669"/>
    <property type="project" value="InterPro"/>
</dbReference>
<dbReference type="GO" id="GO:0042254">
    <property type="term" value="P:ribosome biogenesis"/>
    <property type="evidence" value="ECO:0007669"/>
    <property type="project" value="UniProtKB-UniRule"/>
</dbReference>
<dbReference type="CDD" id="cd01898">
    <property type="entry name" value="Obg"/>
    <property type="match status" value="1"/>
</dbReference>
<dbReference type="FunFam" id="2.70.210.12:FF:000001">
    <property type="entry name" value="GTPase Obg"/>
    <property type="match status" value="1"/>
</dbReference>
<dbReference type="FunFam" id="3.40.50.300:FF:000515">
    <property type="entry name" value="GTPase Obg"/>
    <property type="match status" value="1"/>
</dbReference>
<dbReference type="Gene3D" id="3.30.300.350">
    <property type="entry name" value="GTP-binding protein OBG, C-terminal domain"/>
    <property type="match status" value="1"/>
</dbReference>
<dbReference type="Gene3D" id="2.70.210.12">
    <property type="entry name" value="GTP1/OBG domain"/>
    <property type="match status" value="1"/>
</dbReference>
<dbReference type="Gene3D" id="3.40.50.300">
    <property type="entry name" value="P-loop containing nucleotide triphosphate hydrolases"/>
    <property type="match status" value="1"/>
</dbReference>
<dbReference type="HAMAP" id="MF_01454">
    <property type="entry name" value="GTPase_Obg"/>
    <property type="match status" value="1"/>
</dbReference>
<dbReference type="InterPro" id="IPR031167">
    <property type="entry name" value="G_OBG"/>
</dbReference>
<dbReference type="InterPro" id="IPR006073">
    <property type="entry name" value="GTP-bd"/>
</dbReference>
<dbReference type="InterPro" id="IPR014100">
    <property type="entry name" value="GTP-bd_Obg/CgtA"/>
</dbReference>
<dbReference type="InterPro" id="IPR036346">
    <property type="entry name" value="GTP-bd_prot_GTP1/OBG_C_sf"/>
</dbReference>
<dbReference type="InterPro" id="IPR006074">
    <property type="entry name" value="GTP1-OBG_CS"/>
</dbReference>
<dbReference type="InterPro" id="IPR006169">
    <property type="entry name" value="GTP1_OBG_dom"/>
</dbReference>
<dbReference type="InterPro" id="IPR036726">
    <property type="entry name" value="GTP1_OBG_dom_sf"/>
</dbReference>
<dbReference type="InterPro" id="IPR045086">
    <property type="entry name" value="OBG_GTPase"/>
</dbReference>
<dbReference type="InterPro" id="IPR015349">
    <property type="entry name" value="OCT_dom"/>
</dbReference>
<dbReference type="InterPro" id="IPR027417">
    <property type="entry name" value="P-loop_NTPase"/>
</dbReference>
<dbReference type="InterPro" id="IPR005225">
    <property type="entry name" value="Small_GTP-bd"/>
</dbReference>
<dbReference type="NCBIfam" id="TIGR02729">
    <property type="entry name" value="Obg_CgtA"/>
    <property type="match status" value="1"/>
</dbReference>
<dbReference type="NCBIfam" id="TIGR03595">
    <property type="entry name" value="Obg_CgtA_exten"/>
    <property type="match status" value="1"/>
</dbReference>
<dbReference type="NCBIfam" id="NF008954">
    <property type="entry name" value="PRK12296.1"/>
    <property type="match status" value="1"/>
</dbReference>
<dbReference type="NCBIfam" id="NF008955">
    <property type="entry name" value="PRK12297.1"/>
    <property type="match status" value="1"/>
</dbReference>
<dbReference type="NCBIfam" id="NF008956">
    <property type="entry name" value="PRK12299.1"/>
    <property type="match status" value="1"/>
</dbReference>
<dbReference type="NCBIfam" id="TIGR00231">
    <property type="entry name" value="small_GTP"/>
    <property type="match status" value="1"/>
</dbReference>
<dbReference type="PANTHER" id="PTHR11702">
    <property type="entry name" value="DEVELOPMENTALLY REGULATED GTP-BINDING PROTEIN-RELATED"/>
    <property type="match status" value="1"/>
</dbReference>
<dbReference type="PANTHER" id="PTHR11702:SF31">
    <property type="entry name" value="MITOCHONDRIAL RIBOSOME-ASSOCIATED GTPASE 2"/>
    <property type="match status" value="1"/>
</dbReference>
<dbReference type="Pfam" id="PF09269">
    <property type="entry name" value="DUF1967"/>
    <property type="match status" value="1"/>
</dbReference>
<dbReference type="Pfam" id="PF01018">
    <property type="entry name" value="GTP1_OBG"/>
    <property type="match status" value="1"/>
</dbReference>
<dbReference type="Pfam" id="PF01926">
    <property type="entry name" value="MMR_HSR1"/>
    <property type="match status" value="1"/>
</dbReference>
<dbReference type="PIRSF" id="PIRSF002401">
    <property type="entry name" value="GTP_bd_Obg/CgtA"/>
    <property type="match status" value="1"/>
</dbReference>
<dbReference type="PRINTS" id="PR00326">
    <property type="entry name" value="GTP1OBG"/>
</dbReference>
<dbReference type="SUPFAM" id="SSF102741">
    <property type="entry name" value="Obg GTP-binding protein C-terminal domain"/>
    <property type="match status" value="1"/>
</dbReference>
<dbReference type="SUPFAM" id="SSF82051">
    <property type="entry name" value="Obg GTP-binding protein N-terminal domain"/>
    <property type="match status" value="1"/>
</dbReference>
<dbReference type="SUPFAM" id="SSF52540">
    <property type="entry name" value="P-loop containing nucleoside triphosphate hydrolases"/>
    <property type="match status" value="1"/>
</dbReference>
<dbReference type="PROSITE" id="PS51710">
    <property type="entry name" value="G_OBG"/>
    <property type="match status" value="1"/>
</dbReference>
<dbReference type="PROSITE" id="PS00905">
    <property type="entry name" value="GTP1_OBG"/>
    <property type="match status" value="1"/>
</dbReference>
<dbReference type="PROSITE" id="PS51883">
    <property type="entry name" value="OBG"/>
    <property type="match status" value="1"/>
</dbReference>
<dbReference type="PROSITE" id="PS51881">
    <property type="entry name" value="OCT"/>
    <property type="match status" value="1"/>
</dbReference>